<proteinExistence type="evidence at transcript level"/>
<accession>P34934</accession>
<evidence type="ECO:0000305" key="1"/>
<dbReference type="EMBL" id="M29506">
    <property type="protein sequence ID" value="AAA02938.1"/>
    <property type="molecule type" value="mRNA"/>
</dbReference>
<dbReference type="PIR" id="I46588">
    <property type="entry name" value="I46588"/>
</dbReference>
<dbReference type="SMR" id="P34934"/>
<dbReference type="GlyGen" id="P34934">
    <property type="glycosylation" value="1 site"/>
</dbReference>
<dbReference type="PeptideAtlas" id="P34934"/>
<dbReference type="InParanoid" id="P34934"/>
<dbReference type="Proteomes" id="UP000008227">
    <property type="component" value="Unplaced"/>
</dbReference>
<dbReference type="Proteomes" id="UP000314985">
    <property type="component" value="Unplaced"/>
</dbReference>
<dbReference type="Proteomes" id="UP000694570">
    <property type="component" value="Unplaced"/>
</dbReference>
<dbReference type="Proteomes" id="UP000694571">
    <property type="component" value="Unplaced"/>
</dbReference>
<dbReference type="Proteomes" id="UP000694720">
    <property type="component" value="Unplaced"/>
</dbReference>
<dbReference type="Proteomes" id="UP000694722">
    <property type="component" value="Unplaced"/>
</dbReference>
<dbReference type="Proteomes" id="UP000694723">
    <property type="component" value="Unplaced"/>
</dbReference>
<dbReference type="Proteomes" id="UP000694724">
    <property type="component" value="Unplaced"/>
</dbReference>
<dbReference type="Proteomes" id="UP000694725">
    <property type="component" value="Unplaced"/>
</dbReference>
<dbReference type="Proteomes" id="UP000694726">
    <property type="component" value="Unplaced"/>
</dbReference>
<dbReference type="Proteomes" id="UP000694727">
    <property type="component" value="Unplaced"/>
</dbReference>
<dbReference type="Proteomes" id="UP000694728">
    <property type="component" value="Unplaced"/>
</dbReference>
<dbReference type="GO" id="GO:0005737">
    <property type="term" value="C:cytoplasm"/>
    <property type="evidence" value="ECO:0000318"/>
    <property type="project" value="GO_Central"/>
</dbReference>
<dbReference type="GO" id="GO:0005829">
    <property type="term" value="C:cytosol"/>
    <property type="evidence" value="ECO:0000318"/>
    <property type="project" value="GO_Central"/>
</dbReference>
<dbReference type="GO" id="GO:0005634">
    <property type="term" value="C:nucleus"/>
    <property type="evidence" value="ECO:0000318"/>
    <property type="project" value="GO_Central"/>
</dbReference>
<dbReference type="GO" id="GO:0005886">
    <property type="term" value="C:plasma membrane"/>
    <property type="evidence" value="ECO:0000318"/>
    <property type="project" value="GO_Central"/>
</dbReference>
<dbReference type="GO" id="GO:0005524">
    <property type="term" value="F:ATP binding"/>
    <property type="evidence" value="ECO:0007669"/>
    <property type="project" value="UniProtKB-KW"/>
</dbReference>
<dbReference type="GO" id="GO:0016887">
    <property type="term" value="F:ATP hydrolysis activity"/>
    <property type="evidence" value="ECO:0000318"/>
    <property type="project" value="GO_Central"/>
</dbReference>
<dbReference type="GO" id="GO:0140662">
    <property type="term" value="F:ATP-dependent protein folding chaperone"/>
    <property type="evidence" value="ECO:0007669"/>
    <property type="project" value="InterPro"/>
</dbReference>
<dbReference type="GO" id="GO:0031072">
    <property type="term" value="F:heat shock protein binding"/>
    <property type="evidence" value="ECO:0000318"/>
    <property type="project" value="GO_Central"/>
</dbReference>
<dbReference type="GO" id="GO:0044183">
    <property type="term" value="F:protein folding chaperone"/>
    <property type="evidence" value="ECO:0000318"/>
    <property type="project" value="GO_Central"/>
</dbReference>
<dbReference type="GO" id="GO:0051085">
    <property type="term" value="P:chaperone cofactor-dependent protein refolding"/>
    <property type="evidence" value="ECO:0000318"/>
    <property type="project" value="GO_Central"/>
</dbReference>
<dbReference type="GO" id="GO:0042026">
    <property type="term" value="P:protein refolding"/>
    <property type="evidence" value="ECO:0000318"/>
    <property type="project" value="GO_Central"/>
</dbReference>
<dbReference type="FunFam" id="2.60.34.10:FF:000002">
    <property type="entry name" value="Heat shock 70 kDa"/>
    <property type="match status" value="1"/>
</dbReference>
<dbReference type="FunFam" id="1.20.1270.10:FF:000033">
    <property type="entry name" value="heat shock 70 kDa protein 6"/>
    <property type="match status" value="1"/>
</dbReference>
<dbReference type="FunFam" id="3.30.420.40:FF:000028">
    <property type="entry name" value="heat shock 70 kDa protein-like"/>
    <property type="match status" value="1"/>
</dbReference>
<dbReference type="FunFam" id="3.30.420.40:FF:000135">
    <property type="entry name" value="Heat shock cognate 71 kDa protein"/>
    <property type="match status" value="1"/>
</dbReference>
<dbReference type="FunFam" id="3.90.640.10:FF:000134">
    <property type="entry name" value="Heat shock cognate 71 kDa protein"/>
    <property type="match status" value="1"/>
</dbReference>
<dbReference type="Gene3D" id="1.20.1270.10">
    <property type="match status" value="1"/>
</dbReference>
<dbReference type="Gene3D" id="3.30.420.40">
    <property type="match status" value="2"/>
</dbReference>
<dbReference type="Gene3D" id="3.90.640.10">
    <property type="entry name" value="Actin, Chain A, domain 4"/>
    <property type="match status" value="1"/>
</dbReference>
<dbReference type="Gene3D" id="2.60.34.10">
    <property type="entry name" value="Substrate Binding Domain Of DNAk, Chain A, domain 1"/>
    <property type="match status" value="1"/>
</dbReference>
<dbReference type="InterPro" id="IPR043129">
    <property type="entry name" value="ATPase_NBD"/>
</dbReference>
<dbReference type="InterPro" id="IPR018181">
    <property type="entry name" value="Heat_shock_70_CS"/>
</dbReference>
<dbReference type="InterPro" id="IPR029048">
    <property type="entry name" value="HSP70_C_sf"/>
</dbReference>
<dbReference type="InterPro" id="IPR029047">
    <property type="entry name" value="HSP70_peptide-bd_sf"/>
</dbReference>
<dbReference type="InterPro" id="IPR013126">
    <property type="entry name" value="Hsp_70_fam"/>
</dbReference>
<dbReference type="PANTHER" id="PTHR19375">
    <property type="entry name" value="HEAT SHOCK PROTEIN 70KDA"/>
    <property type="match status" value="1"/>
</dbReference>
<dbReference type="Pfam" id="PF00012">
    <property type="entry name" value="HSP70"/>
    <property type="match status" value="1"/>
</dbReference>
<dbReference type="PRINTS" id="PR00301">
    <property type="entry name" value="HEATSHOCK70"/>
</dbReference>
<dbReference type="SUPFAM" id="SSF53067">
    <property type="entry name" value="Actin-like ATPase domain"/>
    <property type="match status" value="1"/>
</dbReference>
<dbReference type="SUPFAM" id="SSF100934">
    <property type="entry name" value="Heat shock protein 70kD (HSP70), C-terminal subdomain"/>
    <property type="match status" value="1"/>
</dbReference>
<dbReference type="SUPFAM" id="SSF100920">
    <property type="entry name" value="Heat shock protein 70kD (HSP70), peptide-binding domain"/>
    <property type="match status" value="1"/>
</dbReference>
<dbReference type="PROSITE" id="PS01036">
    <property type="entry name" value="HSP70_3"/>
    <property type="match status" value="1"/>
</dbReference>
<sequence>RRLRTACERAKRTLSSSTQATLEIDSLFEGVDFYTSITRARFEELCSDLFRSTLEPVEKALRDAKLDKAQIHDIVLVGGSTRIPKIQKLLQDFFNGRELNKSINPDEAVAYGAAVQAAVLMGDKCEKVQDLLLLDVAPLSLGLETAGGVMTTLIQRNATIPTKQTQNFHYLLQNNQPGVLIQVYEGERAMTRDNNLLGRFELSRIPPTPRGVPQIEVTFDIDANGILSVTATDRSTGRANKMTLTSDKGRLSKEEVERMVREAASHKVEDEAQRDRVAAKNSLEAYVFHVKGSLHEESLRDKIPEEDRCKVQDKCQEVPYLWLEHNQLAEKEEYEHQKRELEQIASISQLLGPCTWGSSCGAQAPKGGPSTGPVIEEVD</sequence>
<name>HSP7X_PIG</name>
<protein>
    <recommendedName>
        <fullName>Heat shock 70 kDa protein</fullName>
    </recommendedName>
</protein>
<keyword id="KW-0067">ATP-binding</keyword>
<keyword id="KW-0547">Nucleotide-binding</keyword>
<keyword id="KW-1185">Reference proteome</keyword>
<keyword id="KW-0346">Stress response</keyword>
<reference key="1">
    <citation type="journal article" date="1990" name="Surgery">
        <title>Molecular biology of circulatory shock. Part II. Expression of four groups of hepatic genes is enhanced after resuscitation from cardiogenic shock.</title>
        <authorList>
            <person name="Buchman T.G."/>
            <person name="Cabin D.E."/>
            <person name="Vickers S."/>
            <person name="Deutschman C.S."/>
            <person name="Delgado E."/>
            <person name="Sussman M.M."/>
            <person name="Bulkley G.B."/>
        </authorList>
    </citation>
    <scope>NUCLEOTIDE SEQUENCE [MRNA]</scope>
    <source>
        <tissue>Liver</tissue>
    </source>
</reference>
<organism>
    <name type="scientific">Sus scrofa</name>
    <name type="common">Pig</name>
    <dbReference type="NCBI Taxonomy" id="9823"/>
    <lineage>
        <taxon>Eukaryota</taxon>
        <taxon>Metazoa</taxon>
        <taxon>Chordata</taxon>
        <taxon>Craniata</taxon>
        <taxon>Vertebrata</taxon>
        <taxon>Euteleostomi</taxon>
        <taxon>Mammalia</taxon>
        <taxon>Eutheria</taxon>
        <taxon>Laurasiatheria</taxon>
        <taxon>Artiodactyla</taxon>
        <taxon>Suina</taxon>
        <taxon>Suidae</taxon>
        <taxon>Sus</taxon>
    </lineage>
</organism>
<comment type="similarity">
    <text evidence="1">Belongs to the heat shock protein 70 family.</text>
</comment>
<feature type="chain" id="PRO_0000078286" description="Heat shock 70 kDa protein">
    <location>
        <begin position="1" status="less than"/>
        <end position="379"/>
    </location>
</feature>
<feature type="non-terminal residue">
    <location>
        <position position="1"/>
    </location>
</feature>